<dbReference type="EC" id="1.17.7.3" evidence="1"/>
<dbReference type="EMBL" id="CP001144">
    <property type="protein sequence ID" value="ACH75211.1"/>
    <property type="molecule type" value="Genomic_DNA"/>
</dbReference>
<dbReference type="RefSeq" id="WP_000551804.1">
    <property type="nucleotide sequence ID" value="NC_011205.1"/>
</dbReference>
<dbReference type="SMR" id="B5FR63"/>
<dbReference type="KEGG" id="sed:SeD_A2892"/>
<dbReference type="HOGENOM" id="CLU_042258_0_0_6"/>
<dbReference type="UniPathway" id="UPA00056">
    <property type="reaction ID" value="UER00096"/>
</dbReference>
<dbReference type="Proteomes" id="UP000008322">
    <property type="component" value="Chromosome"/>
</dbReference>
<dbReference type="GO" id="GO:0051539">
    <property type="term" value="F:4 iron, 4 sulfur cluster binding"/>
    <property type="evidence" value="ECO:0007669"/>
    <property type="project" value="UniProtKB-UniRule"/>
</dbReference>
<dbReference type="GO" id="GO:0046429">
    <property type="term" value="F:4-hydroxy-3-methylbut-2-en-1-yl diphosphate synthase activity (ferredoxin)"/>
    <property type="evidence" value="ECO:0007669"/>
    <property type="project" value="UniProtKB-UniRule"/>
</dbReference>
<dbReference type="GO" id="GO:0141197">
    <property type="term" value="F:4-hydroxy-3-methylbut-2-enyl-diphosphate synthase activity (flavodoxin)"/>
    <property type="evidence" value="ECO:0007669"/>
    <property type="project" value="UniProtKB-EC"/>
</dbReference>
<dbReference type="GO" id="GO:0005506">
    <property type="term" value="F:iron ion binding"/>
    <property type="evidence" value="ECO:0007669"/>
    <property type="project" value="InterPro"/>
</dbReference>
<dbReference type="GO" id="GO:0019288">
    <property type="term" value="P:isopentenyl diphosphate biosynthetic process, methylerythritol 4-phosphate pathway"/>
    <property type="evidence" value="ECO:0007669"/>
    <property type="project" value="UniProtKB-UniRule"/>
</dbReference>
<dbReference type="GO" id="GO:0016114">
    <property type="term" value="P:terpenoid biosynthetic process"/>
    <property type="evidence" value="ECO:0007669"/>
    <property type="project" value="InterPro"/>
</dbReference>
<dbReference type="FunFam" id="3.20.20.20:FF:000001">
    <property type="entry name" value="4-hydroxy-3-methylbut-2-en-1-yl diphosphate synthase (flavodoxin)"/>
    <property type="match status" value="1"/>
</dbReference>
<dbReference type="FunFam" id="3.30.413.10:FF:000002">
    <property type="entry name" value="4-hydroxy-3-methylbut-2-en-1-yl diphosphate synthase (flavodoxin)"/>
    <property type="match status" value="1"/>
</dbReference>
<dbReference type="Gene3D" id="3.20.20.20">
    <property type="entry name" value="Dihydropteroate synthase-like"/>
    <property type="match status" value="1"/>
</dbReference>
<dbReference type="Gene3D" id="3.30.413.10">
    <property type="entry name" value="Sulfite Reductase Hemoprotein, domain 1"/>
    <property type="match status" value="1"/>
</dbReference>
<dbReference type="HAMAP" id="MF_00159">
    <property type="entry name" value="IspG"/>
    <property type="match status" value="1"/>
</dbReference>
<dbReference type="InterPro" id="IPR011005">
    <property type="entry name" value="Dihydropteroate_synth-like_sf"/>
</dbReference>
<dbReference type="InterPro" id="IPR016425">
    <property type="entry name" value="IspG_bac"/>
</dbReference>
<dbReference type="InterPro" id="IPR004588">
    <property type="entry name" value="IspG_bac-typ"/>
</dbReference>
<dbReference type="InterPro" id="IPR045854">
    <property type="entry name" value="NO2/SO3_Rdtase_4Fe4S_sf"/>
</dbReference>
<dbReference type="NCBIfam" id="TIGR00612">
    <property type="entry name" value="ispG_gcpE"/>
    <property type="match status" value="1"/>
</dbReference>
<dbReference type="NCBIfam" id="NF001540">
    <property type="entry name" value="PRK00366.1"/>
    <property type="match status" value="1"/>
</dbReference>
<dbReference type="PANTHER" id="PTHR30454">
    <property type="entry name" value="4-HYDROXY-3-METHYLBUT-2-EN-1-YL DIPHOSPHATE SYNTHASE"/>
    <property type="match status" value="1"/>
</dbReference>
<dbReference type="PANTHER" id="PTHR30454:SF0">
    <property type="entry name" value="4-HYDROXY-3-METHYLBUT-2-EN-1-YL DIPHOSPHATE SYNTHASE (FERREDOXIN), CHLOROPLASTIC"/>
    <property type="match status" value="1"/>
</dbReference>
<dbReference type="Pfam" id="PF04551">
    <property type="entry name" value="GcpE"/>
    <property type="match status" value="1"/>
</dbReference>
<dbReference type="PIRSF" id="PIRSF004640">
    <property type="entry name" value="IspG"/>
    <property type="match status" value="1"/>
</dbReference>
<dbReference type="SUPFAM" id="SSF51717">
    <property type="entry name" value="Dihydropteroate synthetase-like"/>
    <property type="match status" value="1"/>
</dbReference>
<dbReference type="SUPFAM" id="SSF56014">
    <property type="entry name" value="Nitrite and sulphite reductase 4Fe-4S domain-like"/>
    <property type="match status" value="1"/>
</dbReference>
<keyword id="KW-0004">4Fe-4S</keyword>
<keyword id="KW-0408">Iron</keyword>
<keyword id="KW-0411">Iron-sulfur</keyword>
<keyword id="KW-0414">Isoprene biosynthesis</keyword>
<keyword id="KW-0479">Metal-binding</keyword>
<keyword id="KW-0560">Oxidoreductase</keyword>
<proteinExistence type="inferred from homology"/>
<evidence type="ECO:0000255" key="1">
    <source>
        <dbReference type="HAMAP-Rule" id="MF_00159"/>
    </source>
</evidence>
<feature type="chain" id="PRO_1000097179" description="4-hydroxy-3-methylbut-2-en-1-yl diphosphate synthase (flavodoxin)">
    <location>
        <begin position="1"/>
        <end position="372"/>
    </location>
</feature>
<feature type="binding site" evidence="1">
    <location>
        <position position="270"/>
    </location>
    <ligand>
        <name>[4Fe-4S] cluster</name>
        <dbReference type="ChEBI" id="CHEBI:49883"/>
    </ligand>
</feature>
<feature type="binding site" evidence="1">
    <location>
        <position position="273"/>
    </location>
    <ligand>
        <name>[4Fe-4S] cluster</name>
        <dbReference type="ChEBI" id="CHEBI:49883"/>
    </ligand>
</feature>
<feature type="binding site" evidence="1">
    <location>
        <position position="305"/>
    </location>
    <ligand>
        <name>[4Fe-4S] cluster</name>
        <dbReference type="ChEBI" id="CHEBI:49883"/>
    </ligand>
</feature>
<feature type="binding site" evidence="1">
    <location>
        <position position="312"/>
    </location>
    <ligand>
        <name>[4Fe-4S] cluster</name>
        <dbReference type="ChEBI" id="CHEBI:49883"/>
    </ligand>
</feature>
<comment type="function">
    <text evidence="1">Converts 2C-methyl-D-erythritol 2,4-cyclodiphosphate (ME-2,4cPP) into 1-hydroxy-2-methyl-2-(E)-butenyl 4-diphosphate.</text>
</comment>
<comment type="catalytic activity">
    <reaction evidence="1">
        <text>(2E)-4-hydroxy-3-methylbut-2-enyl diphosphate + oxidized [flavodoxin] + H2O + 2 H(+) = 2-C-methyl-D-erythritol 2,4-cyclic diphosphate + reduced [flavodoxin]</text>
        <dbReference type="Rhea" id="RHEA:43604"/>
        <dbReference type="Rhea" id="RHEA-COMP:10622"/>
        <dbReference type="Rhea" id="RHEA-COMP:10623"/>
        <dbReference type="ChEBI" id="CHEBI:15377"/>
        <dbReference type="ChEBI" id="CHEBI:15378"/>
        <dbReference type="ChEBI" id="CHEBI:57618"/>
        <dbReference type="ChEBI" id="CHEBI:58210"/>
        <dbReference type="ChEBI" id="CHEBI:58483"/>
        <dbReference type="ChEBI" id="CHEBI:128753"/>
        <dbReference type="EC" id="1.17.7.3"/>
    </reaction>
</comment>
<comment type="cofactor">
    <cofactor evidence="1">
        <name>[4Fe-4S] cluster</name>
        <dbReference type="ChEBI" id="CHEBI:49883"/>
    </cofactor>
    <text evidence="1">Binds 1 [4Fe-4S] cluster.</text>
</comment>
<comment type="pathway">
    <text evidence="1">Isoprenoid biosynthesis; isopentenyl diphosphate biosynthesis via DXP pathway; isopentenyl diphosphate from 1-deoxy-D-xylulose 5-phosphate: step 5/6.</text>
</comment>
<comment type="similarity">
    <text evidence="1">Belongs to the IspG family.</text>
</comment>
<name>ISPG_SALDC</name>
<reference key="1">
    <citation type="journal article" date="2011" name="J. Bacteriol.">
        <title>Comparative genomics of 28 Salmonella enterica isolates: evidence for CRISPR-mediated adaptive sublineage evolution.</title>
        <authorList>
            <person name="Fricke W.F."/>
            <person name="Mammel M.K."/>
            <person name="McDermott P.F."/>
            <person name="Tartera C."/>
            <person name="White D.G."/>
            <person name="Leclerc J.E."/>
            <person name="Ravel J."/>
            <person name="Cebula T.A."/>
        </authorList>
    </citation>
    <scope>NUCLEOTIDE SEQUENCE [LARGE SCALE GENOMIC DNA]</scope>
    <source>
        <strain>CT_02021853</strain>
    </source>
</reference>
<organism>
    <name type="scientific">Salmonella dublin (strain CT_02021853)</name>
    <dbReference type="NCBI Taxonomy" id="439851"/>
    <lineage>
        <taxon>Bacteria</taxon>
        <taxon>Pseudomonadati</taxon>
        <taxon>Pseudomonadota</taxon>
        <taxon>Gammaproteobacteria</taxon>
        <taxon>Enterobacterales</taxon>
        <taxon>Enterobacteriaceae</taxon>
        <taxon>Salmonella</taxon>
    </lineage>
</organism>
<gene>
    <name evidence="1" type="primary">ispG</name>
    <name type="ordered locus">SeD_A2892</name>
</gene>
<accession>B5FR63</accession>
<protein>
    <recommendedName>
        <fullName evidence="1">4-hydroxy-3-methylbut-2-en-1-yl diphosphate synthase (flavodoxin)</fullName>
        <ecNumber evidence="1">1.17.7.3</ecNumber>
    </recommendedName>
    <alternativeName>
        <fullName evidence="1">1-hydroxy-2-methyl-2-(E)-butenyl 4-diphosphate synthase</fullName>
    </alternativeName>
</protein>
<sequence>MHNQAPIQRRKSTRIYVGNVPIGDGAPIAVQSMTNTRTTDVEATVNQIKALERVGADIVRVSVPTMDAAEAFKLIKQQVNVPLVADIHFDYRIALKVAEYGVDCLRINPGNIGNEERIRMVVDCARDKNIPIRIGVNAGSLEKDLQEKYGEPTPQALLESAMRHVDHLDRLNFDQFKVSVKASDVFLAVESYRLLAKQIDQPLHLGITEAGGARSGAVKSAIGLGLLLSEGIGDTLRVSLAADPVEEIKVGFDILKSLRIRARGINFIACPTCSRQEFDVIGTVNALEQRLEDIITPMDVSIIGCVVNGPGEALVSTLGVTGGNKKSGLYEDGVRKDRLDNDDMIAQLESRIRAKASQLDEARRIDVLQVEK</sequence>